<name>NDHK_SOLTU</name>
<accession>Q2VEH3</accession>
<accession>Q27S46</accession>
<keyword id="KW-0004">4Fe-4S</keyword>
<keyword id="KW-0150">Chloroplast</keyword>
<keyword id="KW-0408">Iron</keyword>
<keyword id="KW-0411">Iron-sulfur</keyword>
<keyword id="KW-0472">Membrane</keyword>
<keyword id="KW-0479">Metal-binding</keyword>
<keyword id="KW-0520">NAD</keyword>
<keyword id="KW-0521">NADP</keyword>
<keyword id="KW-0934">Plastid</keyword>
<keyword id="KW-0618">Plastoquinone</keyword>
<keyword id="KW-0874">Quinone</keyword>
<keyword id="KW-1185">Reference proteome</keyword>
<keyword id="KW-0793">Thylakoid</keyword>
<keyword id="KW-1278">Translocase</keyword>
<keyword id="KW-0813">Transport</keyword>
<organism>
    <name type="scientific">Solanum tuberosum</name>
    <name type="common">Potato</name>
    <dbReference type="NCBI Taxonomy" id="4113"/>
    <lineage>
        <taxon>Eukaryota</taxon>
        <taxon>Viridiplantae</taxon>
        <taxon>Streptophyta</taxon>
        <taxon>Embryophyta</taxon>
        <taxon>Tracheophyta</taxon>
        <taxon>Spermatophyta</taxon>
        <taxon>Magnoliopsida</taxon>
        <taxon>eudicotyledons</taxon>
        <taxon>Gunneridae</taxon>
        <taxon>Pentapetalae</taxon>
        <taxon>asterids</taxon>
        <taxon>lamiids</taxon>
        <taxon>Solanales</taxon>
        <taxon>Solanaceae</taxon>
        <taxon>Solanoideae</taxon>
        <taxon>Solaneae</taxon>
        <taxon>Solanum</taxon>
    </lineage>
</organism>
<protein>
    <recommendedName>
        <fullName evidence="1">NAD(P)H-quinone oxidoreductase subunit K, chloroplastic</fullName>
        <ecNumber evidence="1">7.1.1.-</ecNumber>
    </recommendedName>
    <alternativeName>
        <fullName evidence="1">NAD(P)H dehydrogenase subunit K</fullName>
    </alternativeName>
    <alternativeName>
        <fullName evidence="1">NADH-plastoquinone oxidoreductase subunit K</fullName>
    </alternativeName>
</protein>
<gene>
    <name evidence="1" type="primary">ndhK</name>
</gene>
<feature type="chain" id="PRO_0000277564" description="NAD(P)H-quinone oxidoreductase subunit K, chloroplastic">
    <location>
        <begin position="1"/>
        <end position="225"/>
    </location>
</feature>
<feature type="binding site" evidence="1">
    <location>
        <position position="43"/>
    </location>
    <ligand>
        <name>[4Fe-4S] cluster</name>
        <dbReference type="ChEBI" id="CHEBI:49883"/>
    </ligand>
</feature>
<feature type="binding site" evidence="1">
    <location>
        <position position="44"/>
    </location>
    <ligand>
        <name>[4Fe-4S] cluster</name>
        <dbReference type="ChEBI" id="CHEBI:49883"/>
    </ligand>
</feature>
<feature type="binding site" evidence="1">
    <location>
        <position position="108"/>
    </location>
    <ligand>
        <name>[4Fe-4S] cluster</name>
        <dbReference type="ChEBI" id="CHEBI:49883"/>
    </ligand>
</feature>
<feature type="binding site" evidence="1">
    <location>
        <position position="139"/>
    </location>
    <ligand>
        <name>[4Fe-4S] cluster</name>
        <dbReference type="ChEBI" id="CHEBI:49883"/>
    </ligand>
</feature>
<geneLocation type="chloroplast"/>
<dbReference type="EC" id="7.1.1.-" evidence="1"/>
<dbReference type="EMBL" id="DQ231562">
    <property type="protein sequence ID" value="ABB90045.1"/>
    <property type="status" value="ALT_INIT"/>
    <property type="molecule type" value="Genomic_DNA"/>
</dbReference>
<dbReference type="EMBL" id="DQ386163">
    <property type="protein sequence ID" value="ABD47061.1"/>
    <property type="status" value="ALT_INIT"/>
    <property type="molecule type" value="Genomic_DNA"/>
</dbReference>
<dbReference type="RefSeq" id="YP_635643.1">
    <property type="nucleotide sequence ID" value="NC_008096.2"/>
</dbReference>
<dbReference type="SMR" id="Q2VEH3"/>
<dbReference type="FunCoup" id="Q2VEH3">
    <property type="interactions" value="39"/>
</dbReference>
<dbReference type="STRING" id="4113.Q2VEH3"/>
<dbReference type="PaxDb" id="4113-PGSC0003DMT400017976"/>
<dbReference type="GeneID" id="4099978"/>
<dbReference type="KEGG" id="sot:4099978"/>
<dbReference type="eggNOG" id="KOG1687">
    <property type="taxonomic scope" value="Eukaryota"/>
</dbReference>
<dbReference type="InParanoid" id="Q2VEH3"/>
<dbReference type="OrthoDB" id="1871715at2759"/>
<dbReference type="Proteomes" id="UP000011115">
    <property type="component" value="Unassembled WGS sequence"/>
</dbReference>
<dbReference type="ExpressionAtlas" id="Q2VEH3">
    <property type="expression patterns" value="baseline"/>
</dbReference>
<dbReference type="GO" id="GO:0009535">
    <property type="term" value="C:chloroplast thylakoid membrane"/>
    <property type="evidence" value="ECO:0007669"/>
    <property type="project" value="UniProtKB-SubCell"/>
</dbReference>
<dbReference type="GO" id="GO:0045271">
    <property type="term" value="C:respiratory chain complex I"/>
    <property type="evidence" value="ECO:0000318"/>
    <property type="project" value="GO_Central"/>
</dbReference>
<dbReference type="GO" id="GO:0051539">
    <property type="term" value="F:4 iron, 4 sulfur cluster binding"/>
    <property type="evidence" value="ECO:0007669"/>
    <property type="project" value="UniProtKB-KW"/>
</dbReference>
<dbReference type="GO" id="GO:0005506">
    <property type="term" value="F:iron ion binding"/>
    <property type="evidence" value="ECO:0007669"/>
    <property type="project" value="UniProtKB-UniRule"/>
</dbReference>
<dbReference type="GO" id="GO:0008137">
    <property type="term" value="F:NADH dehydrogenase (ubiquinone) activity"/>
    <property type="evidence" value="ECO:0000318"/>
    <property type="project" value="GO_Central"/>
</dbReference>
<dbReference type="GO" id="GO:0048038">
    <property type="term" value="F:quinone binding"/>
    <property type="evidence" value="ECO:0007669"/>
    <property type="project" value="UniProtKB-KW"/>
</dbReference>
<dbReference type="GO" id="GO:0009060">
    <property type="term" value="P:aerobic respiration"/>
    <property type="evidence" value="ECO:0000318"/>
    <property type="project" value="GO_Central"/>
</dbReference>
<dbReference type="GO" id="GO:0015990">
    <property type="term" value="P:electron transport coupled proton transport"/>
    <property type="evidence" value="ECO:0000318"/>
    <property type="project" value="GO_Central"/>
</dbReference>
<dbReference type="GO" id="GO:0019684">
    <property type="term" value="P:photosynthesis, light reaction"/>
    <property type="evidence" value="ECO:0007669"/>
    <property type="project" value="UniProtKB-UniRule"/>
</dbReference>
<dbReference type="FunFam" id="3.40.50.12280:FF:000003">
    <property type="entry name" value="NAD(P)H-quinone oxidoreductase subunit K, chloroplastic"/>
    <property type="match status" value="1"/>
</dbReference>
<dbReference type="Gene3D" id="3.40.50.12280">
    <property type="match status" value="1"/>
</dbReference>
<dbReference type="HAMAP" id="MF_01356">
    <property type="entry name" value="NDH1_NuoB"/>
    <property type="match status" value="1"/>
</dbReference>
<dbReference type="InterPro" id="IPR006137">
    <property type="entry name" value="NADH_UbQ_OxRdtase-like_20kDa"/>
</dbReference>
<dbReference type="InterPro" id="IPR006138">
    <property type="entry name" value="NADH_UQ_OxRdtase_20Kd_su"/>
</dbReference>
<dbReference type="NCBIfam" id="TIGR01957">
    <property type="entry name" value="nuoB_fam"/>
    <property type="match status" value="1"/>
</dbReference>
<dbReference type="NCBIfam" id="NF005012">
    <property type="entry name" value="PRK06411.1"/>
    <property type="match status" value="1"/>
</dbReference>
<dbReference type="PANTHER" id="PTHR11995">
    <property type="entry name" value="NADH DEHYDROGENASE"/>
    <property type="match status" value="1"/>
</dbReference>
<dbReference type="PANTHER" id="PTHR11995:SF14">
    <property type="entry name" value="NADH DEHYDROGENASE [UBIQUINONE] IRON-SULFUR PROTEIN 7, MITOCHONDRIAL"/>
    <property type="match status" value="1"/>
</dbReference>
<dbReference type="Pfam" id="PF01058">
    <property type="entry name" value="Oxidored_q6"/>
    <property type="match status" value="1"/>
</dbReference>
<dbReference type="SUPFAM" id="SSF56770">
    <property type="entry name" value="HydA/Nqo6-like"/>
    <property type="match status" value="1"/>
</dbReference>
<dbReference type="PROSITE" id="PS01150">
    <property type="entry name" value="COMPLEX1_20K"/>
    <property type="match status" value="1"/>
</dbReference>
<comment type="function">
    <text evidence="1">NDH shuttles electrons from NAD(P)H:plastoquinone, via FMN and iron-sulfur (Fe-S) centers, to quinones in the photosynthetic chain and possibly in a chloroplast respiratory chain. The immediate electron acceptor for the enzyme in this species is believed to be plastoquinone. Couples the redox reaction to proton translocation, and thus conserves the redox energy in a proton gradient.</text>
</comment>
<comment type="catalytic activity">
    <reaction evidence="1">
        <text>a plastoquinone + NADH + (n+1) H(+)(in) = a plastoquinol + NAD(+) + n H(+)(out)</text>
        <dbReference type="Rhea" id="RHEA:42608"/>
        <dbReference type="Rhea" id="RHEA-COMP:9561"/>
        <dbReference type="Rhea" id="RHEA-COMP:9562"/>
        <dbReference type="ChEBI" id="CHEBI:15378"/>
        <dbReference type="ChEBI" id="CHEBI:17757"/>
        <dbReference type="ChEBI" id="CHEBI:57540"/>
        <dbReference type="ChEBI" id="CHEBI:57945"/>
        <dbReference type="ChEBI" id="CHEBI:62192"/>
    </reaction>
</comment>
<comment type="catalytic activity">
    <reaction evidence="1">
        <text>a plastoquinone + NADPH + (n+1) H(+)(in) = a plastoquinol + NADP(+) + n H(+)(out)</text>
        <dbReference type="Rhea" id="RHEA:42612"/>
        <dbReference type="Rhea" id="RHEA-COMP:9561"/>
        <dbReference type="Rhea" id="RHEA-COMP:9562"/>
        <dbReference type="ChEBI" id="CHEBI:15378"/>
        <dbReference type="ChEBI" id="CHEBI:17757"/>
        <dbReference type="ChEBI" id="CHEBI:57783"/>
        <dbReference type="ChEBI" id="CHEBI:58349"/>
        <dbReference type="ChEBI" id="CHEBI:62192"/>
    </reaction>
</comment>
<comment type="cofactor">
    <cofactor evidence="1">
        <name>[4Fe-4S] cluster</name>
        <dbReference type="ChEBI" id="CHEBI:49883"/>
    </cofactor>
    <text evidence="1">Binds 1 [4Fe-4S] cluster.</text>
</comment>
<comment type="subunit">
    <text evidence="1">NDH is composed of at least 16 different subunits, 5 of which are encoded in the nucleus.</text>
</comment>
<comment type="subcellular location">
    <subcellularLocation>
        <location evidence="1">Plastid</location>
        <location evidence="1">Chloroplast thylakoid membrane</location>
        <topology evidence="1">Peripheral membrane protein</topology>
        <orientation evidence="1">Stromal side</orientation>
    </subcellularLocation>
</comment>
<comment type="similarity">
    <text evidence="1">Belongs to the complex I 20 kDa subunit family.</text>
</comment>
<comment type="sequence caution" evidence="2">
    <conflict type="erroneous initiation">
        <sequence resource="EMBL-CDS" id="ABB90045"/>
    </conflict>
</comment>
<comment type="sequence caution" evidence="2">
    <conflict type="erroneous initiation">
        <sequence resource="EMBL-CDS" id="ABD47061"/>
    </conflict>
</comment>
<sequence length="225" mass="25448">MNSIQFPLLDRTAPNSVISTTLNDLSNWSRLSSLWPLLYGTSCCFIEFASLIGSRFDFDRYGLVPRSSPRQSDLILTAGTVTMKMAPSLVRLYEQMPEPKYVIAMGACTITGGMFSTDSYSTVRGVDKLIPVDVYLPGCPPKPEAVIDAITKLRKKISRELYEDRIRSQRANRCFTTNHKFHVRRSIHTGNYDQRVLYQPPSTSEIPTEIFFKYKNSVSSAELVN</sequence>
<evidence type="ECO:0000255" key="1">
    <source>
        <dbReference type="HAMAP-Rule" id="MF_01356"/>
    </source>
</evidence>
<evidence type="ECO:0000305" key="2"/>
<reference key="1">
    <citation type="journal article" date="2006" name="Plant Cell Rep.">
        <title>The complete chloroplast genome sequences of Solanum tuberosum and comparative analysis with Solanaceae species identified the presence of a 241-bp deletion in cultivated potato chloroplast DNA sequence.</title>
        <authorList>
            <person name="Chung H.-J."/>
            <person name="Jung J.D."/>
            <person name="Park H.-W."/>
            <person name="Kim J.-H."/>
            <person name="Cha H.W."/>
            <person name="Min S.R."/>
            <person name="Jeong W.-J."/>
            <person name="Liu J.R."/>
        </authorList>
    </citation>
    <scope>NUCLEOTIDE SEQUENCE [LARGE SCALE GENOMIC DNA]</scope>
    <source>
        <strain>cv. Desiree</strain>
    </source>
</reference>
<reference key="2">
    <citation type="submission" date="2006-02" db="EMBL/GenBank/DDBJ databases">
        <title>Complete chloroplast genome sequences of Solanum tuberosum cultivar Desiree and comparative analyses with other Solanaceae genomes.</title>
        <authorList>
            <person name="Gargano D."/>
            <person name="Scotti N."/>
            <person name="Vezzi A."/>
            <person name="Bilardi A."/>
            <person name="Valle G."/>
            <person name="Grillo S."/>
            <person name="Cardi T."/>
        </authorList>
    </citation>
    <scope>NUCLEOTIDE SEQUENCE [LARGE SCALE GENOMIC DNA]</scope>
    <source>
        <strain>cv. Desiree</strain>
    </source>
</reference>
<proteinExistence type="inferred from homology"/>